<proteinExistence type="inferred from homology"/>
<feature type="chain" id="PRO_1000149195" description="2-isopropylmalate synthase">
    <location>
        <begin position="1"/>
        <end position="523"/>
    </location>
</feature>
<feature type="domain" description="Pyruvate carboxyltransferase" evidence="1">
    <location>
        <begin position="5"/>
        <end position="267"/>
    </location>
</feature>
<feature type="region of interest" description="Regulatory domain" evidence="1">
    <location>
        <begin position="392"/>
        <end position="523"/>
    </location>
</feature>
<feature type="binding site" evidence="1">
    <location>
        <position position="14"/>
    </location>
    <ligand>
        <name>Mn(2+)</name>
        <dbReference type="ChEBI" id="CHEBI:29035"/>
    </ligand>
</feature>
<feature type="binding site" evidence="1">
    <location>
        <position position="202"/>
    </location>
    <ligand>
        <name>Mn(2+)</name>
        <dbReference type="ChEBI" id="CHEBI:29035"/>
    </ligand>
</feature>
<feature type="binding site" evidence="1">
    <location>
        <position position="204"/>
    </location>
    <ligand>
        <name>Mn(2+)</name>
        <dbReference type="ChEBI" id="CHEBI:29035"/>
    </ligand>
</feature>
<feature type="binding site" evidence="1">
    <location>
        <position position="238"/>
    </location>
    <ligand>
        <name>Mn(2+)</name>
        <dbReference type="ChEBI" id="CHEBI:29035"/>
    </ligand>
</feature>
<organism>
    <name type="scientific">Escherichia coli (strain SE11)</name>
    <dbReference type="NCBI Taxonomy" id="409438"/>
    <lineage>
        <taxon>Bacteria</taxon>
        <taxon>Pseudomonadati</taxon>
        <taxon>Pseudomonadota</taxon>
        <taxon>Gammaproteobacteria</taxon>
        <taxon>Enterobacterales</taxon>
        <taxon>Enterobacteriaceae</taxon>
        <taxon>Escherichia</taxon>
    </lineage>
</organism>
<reference key="1">
    <citation type="journal article" date="2008" name="DNA Res.">
        <title>Complete genome sequence and comparative analysis of the wild-type commensal Escherichia coli strain SE11 isolated from a healthy adult.</title>
        <authorList>
            <person name="Oshima K."/>
            <person name="Toh H."/>
            <person name="Ogura Y."/>
            <person name="Sasamoto H."/>
            <person name="Morita H."/>
            <person name="Park S.-H."/>
            <person name="Ooka T."/>
            <person name="Iyoda S."/>
            <person name="Taylor T.D."/>
            <person name="Hayashi T."/>
            <person name="Itoh K."/>
            <person name="Hattori M."/>
        </authorList>
    </citation>
    <scope>NUCLEOTIDE SEQUENCE [LARGE SCALE GENOMIC DNA]</scope>
    <source>
        <strain>SE11</strain>
    </source>
</reference>
<sequence>MSQQVIIFDTTLRDGEQALQASLSVKEKLQIALALERMGVDVMEVGFPVSSPGDFESVQTIARQVKNSRVCALARCVEKDIDVAAESLKVAEAFRIHTFIATSPMHIATKLRSTLDEVIERAIYMVKRARNYTDDVEFSCEDAGRTPIADLARVVEAAINAGATTINIPDTVGYTMPFEFAGIISGLYERVPNIDKAIISVHTHDDLGLAVGNSLAAVHAGARQVEGAMNGIGERAGNCSLEEVIMAIKVRKDILNVHTAINHQEIWRTSQLVSQICNMPIPANKAIVGSGAFAHSSGIHQDGVLKNRENYEIMTPESIGLNQIQLNLTSRSGRAAVKHRMDEMGYKESEYNLDNLYDAFLKLADKKGQVFDYDLEALAFIGKQQEEPEHFRLDYFSVQSGSNDIATAAVKLACGEEVKAEAANGNGPVDAVYQAINRITDYNVELVKYSLTAKGHGKDALGQVDIVANYNGRRFHGVGLATDIVESSAKAMVHVLNNIWRAAEVEKELQRKAQHNENNKETV</sequence>
<keyword id="KW-0028">Amino-acid biosynthesis</keyword>
<keyword id="KW-0100">Branched-chain amino acid biosynthesis</keyword>
<keyword id="KW-0963">Cytoplasm</keyword>
<keyword id="KW-0432">Leucine biosynthesis</keyword>
<keyword id="KW-0464">Manganese</keyword>
<keyword id="KW-0479">Metal-binding</keyword>
<keyword id="KW-0808">Transferase</keyword>
<accession>B6HZ24</accession>
<name>LEU1_ECOSE</name>
<dbReference type="EC" id="2.3.3.13" evidence="1"/>
<dbReference type="EMBL" id="AP009240">
    <property type="protein sequence ID" value="BAG75598.1"/>
    <property type="molecule type" value="Genomic_DNA"/>
</dbReference>
<dbReference type="RefSeq" id="WP_000082846.1">
    <property type="nucleotide sequence ID" value="NC_011415.1"/>
</dbReference>
<dbReference type="SMR" id="B6HZ24"/>
<dbReference type="GeneID" id="75202109"/>
<dbReference type="KEGG" id="ecy:ECSE_0074"/>
<dbReference type="HOGENOM" id="CLU_022158_0_1_6"/>
<dbReference type="UniPathway" id="UPA00048">
    <property type="reaction ID" value="UER00070"/>
</dbReference>
<dbReference type="Proteomes" id="UP000008199">
    <property type="component" value="Chromosome"/>
</dbReference>
<dbReference type="GO" id="GO:0005829">
    <property type="term" value="C:cytosol"/>
    <property type="evidence" value="ECO:0007669"/>
    <property type="project" value="TreeGrafter"/>
</dbReference>
<dbReference type="GO" id="GO:0003852">
    <property type="term" value="F:2-isopropylmalate synthase activity"/>
    <property type="evidence" value="ECO:0007669"/>
    <property type="project" value="UniProtKB-UniRule"/>
</dbReference>
<dbReference type="GO" id="GO:0003985">
    <property type="term" value="F:acetyl-CoA C-acetyltransferase activity"/>
    <property type="evidence" value="ECO:0007669"/>
    <property type="project" value="UniProtKB-UniRule"/>
</dbReference>
<dbReference type="GO" id="GO:0030145">
    <property type="term" value="F:manganese ion binding"/>
    <property type="evidence" value="ECO:0007669"/>
    <property type="project" value="UniProtKB-UniRule"/>
</dbReference>
<dbReference type="GO" id="GO:0009098">
    <property type="term" value="P:L-leucine biosynthetic process"/>
    <property type="evidence" value="ECO:0007669"/>
    <property type="project" value="UniProtKB-UniRule"/>
</dbReference>
<dbReference type="CDD" id="cd07940">
    <property type="entry name" value="DRE_TIM_IPMS"/>
    <property type="match status" value="1"/>
</dbReference>
<dbReference type="FunFam" id="1.10.238.260:FF:000001">
    <property type="entry name" value="2-isopropylmalate synthase"/>
    <property type="match status" value="1"/>
</dbReference>
<dbReference type="FunFam" id="3.20.20.70:FF:000010">
    <property type="entry name" value="2-isopropylmalate synthase"/>
    <property type="match status" value="1"/>
</dbReference>
<dbReference type="FunFam" id="3.30.160.270:FF:000001">
    <property type="entry name" value="2-isopropylmalate synthase"/>
    <property type="match status" value="1"/>
</dbReference>
<dbReference type="Gene3D" id="1.10.238.260">
    <property type="match status" value="1"/>
</dbReference>
<dbReference type="Gene3D" id="3.30.160.270">
    <property type="match status" value="1"/>
</dbReference>
<dbReference type="Gene3D" id="3.20.20.70">
    <property type="entry name" value="Aldolase class I"/>
    <property type="match status" value="1"/>
</dbReference>
<dbReference type="HAMAP" id="MF_01025">
    <property type="entry name" value="LeuA_type1"/>
    <property type="match status" value="1"/>
</dbReference>
<dbReference type="InterPro" id="IPR050073">
    <property type="entry name" value="2-IPM_HCS-like"/>
</dbReference>
<dbReference type="InterPro" id="IPR013709">
    <property type="entry name" value="2-isopropylmalate_synth_dimer"/>
</dbReference>
<dbReference type="InterPro" id="IPR002034">
    <property type="entry name" value="AIPM/Hcit_synth_CS"/>
</dbReference>
<dbReference type="InterPro" id="IPR013785">
    <property type="entry name" value="Aldolase_TIM"/>
</dbReference>
<dbReference type="InterPro" id="IPR054691">
    <property type="entry name" value="LeuA/HCS_post-cat"/>
</dbReference>
<dbReference type="InterPro" id="IPR036230">
    <property type="entry name" value="LeuA_allosteric_dom_sf"/>
</dbReference>
<dbReference type="InterPro" id="IPR005671">
    <property type="entry name" value="LeuA_bact_synth"/>
</dbReference>
<dbReference type="InterPro" id="IPR000891">
    <property type="entry name" value="PYR_CT"/>
</dbReference>
<dbReference type="NCBIfam" id="TIGR00973">
    <property type="entry name" value="leuA_bact"/>
    <property type="match status" value="1"/>
</dbReference>
<dbReference type="NCBIfam" id="NF002084">
    <property type="entry name" value="PRK00915.1-1"/>
    <property type="match status" value="1"/>
</dbReference>
<dbReference type="NCBIfam" id="NF002086">
    <property type="entry name" value="PRK00915.1-3"/>
    <property type="match status" value="1"/>
</dbReference>
<dbReference type="PANTHER" id="PTHR10277:SF9">
    <property type="entry name" value="2-ISOPROPYLMALATE SYNTHASE 1, CHLOROPLASTIC-RELATED"/>
    <property type="match status" value="1"/>
</dbReference>
<dbReference type="PANTHER" id="PTHR10277">
    <property type="entry name" value="HOMOCITRATE SYNTHASE-RELATED"/>
    <property type="match status" value="1"/>
</dbReference>
<dbReference type="Pfam" id="PF22617">
    <property type="entry name" value="HCS_D2"/>
    <property type="match status" value="1"/>
</dbReference>
<dbReference type="Pfam" id="PF00682">
    <property type="entry name" value="HMGL-like"/>
    <property type="match status" value="1"/>
</dbReference>
<dbReference type="Pfam" id="PF08502">
    <property type="entry name" value="LeuA_dimer"/>
    <property type="match status" value="1"/>
</dbReference>
<dbReference type="SMART" id="SM00917">
    <property type="entry name" value="LeuA_dimer"/>
    <property type="match status" value="1"/>
</dbReference>
<dbReference type="SUPFAM" id="SSF110921">
    <property type="entry name" value="2-isopropylmalate synthase LeuA, allosteric (dimerisation) domain"/>
    <property type="match status" value="1"/>
</dbReference>
<dbReference type="SUPFAM" id="SSF51569">
    <property type="entry name" value="Aldolase"/>
    <property type="match status" value="1"/>
</dbReference>
<dbReference type="PROSITE" id="PS00815">
    <property type="entry name" value="AIPM_HOMOCIT_SYNTH_1"/>
    <property type="match status" value="1"/>
</dbReference>
<dbReference type="PROSITE" id="PS00816">
    <property type="entry name" value="AIPM_HOMOCIT_SYNTH_2"/>
    <property type="match status" value="1"/>
</dbReference>
<dbReference type="PROSITE" id="PS50991">
    <property type="entry name" value="PYR_CT"/>
    <property type="match status" value="1"/>
</dbReference>
<protein>
    <recommendedName>
        <fullName evidence="1">2-isopropylmalate synthase</fullName>
        <ecNumber evidence="1">2.3.3.13</ecNumber>
    </recommendedName>
    <alternativeName>
        <fullName evidence="1">Alpha-IPM synthase</fullName>
    </alternativeName>
    <alternativeName>
        <fullName evidence="1">Alpha-isopropylmalate synthase</fullName>
    </alternativeName>
</protein>
<evidence type="ECO:0000255" key="1">
    <source>
        <dbReference type="HAMAP-Rule" id="MF_01025"/>
    </source>
</evidence>
<gene>
    <name evidence="1" type="primary">leuA</name>
    <name type="ordered locus">ECSE_0074</name>
</gene>
<comment type="function">
    <text evidence="1">Catalyzes the condensation of the acetyl group of acetyl-CoA with 3-methyl-2-oxobutanoate (2-ketoisovalerate) to form 3-carboxy-3-hydroxy-4-methylpentanoate (2-isopropylmalate).</text>
</comment>
<comment type="catalytic activity">
    <reaction evidence="1">
        <text>3-methyl-2-oxobutanoate + acetyl-CoA + H2O = (2S)-2-isopropylmalate + CoA + H(+)</text>
        <dbReference type="Rhea" id="RHEA:21524"/>
        <dbReference type="ChEBI" id="CHEBI:1178"/>
        <dbReference type="ChEBI" id="CHEBI:11851"/>
        <dbReference type="ChEBI" id="CHEBI:15377"/>
        <dbReference type="ChEBI" id="CHEBI:15378"/>
        <dbReference type="ChEBI" id="CHEBI:57287"/>
        <dbReference type="ChEBI" id="CHEBI:57288"/>
        <dbReference type="EC" id="2.3.3.13"/>
    </reaction>
</comment>
<comment type="cofactor">
    <cofactor evidence="1">
        <name>Mn(2+)</name>
        <dbReference type="ChEBI" id="CHEBI:29035"/>
    </cofactor>
</comment>
<comment type="pathway">
    <text evidence="1">Amino-acid biosynthesis; L-leucine biosynthesis; L-leucine from 3-methyl-2-oxobutanoate: step 1/4.</text>
</comment>
<comment type="subunit">
    <text evidence="1">Homodimer.</text>
</comment>
<comment type="subcellular location">
    <subcellularLocation>
        <location evidence="1">Cytoplasm</location>
    </subcellularLocation>
</comment>
<comment type="similarity">
    <text evidence="1">Belongs to the alpha-IPM synthase/homocitrate synthase family. LeuA type 1 subfamily.</text>
</comment>